<keyword id="KW-0249">Electron transport</keyword>
<keyword id="KW-0472">Membrane</keyword>
<keyword id="KW-0602">Photosynthesis</keyword>
<keyword id="KW-0604">Photosystem II</keyword>
<keyword id="KW-0732">Signal</keyword>
<keyword id="KW-0793">Thylakoid</keyword>
<keyword id="KW-0813">Transport</keyword>
<gene>
    <name evidence="1" type="primary">psbU</name>
    <name type="ordered locus">Syncc9605_2334</name>
</gene>
<dbReference type="EMBL" id="CP000110">
    <property type="protein sequence ID" value="ABB36066.1"/>
    <property type="molecule type" value="Genomic_DNA"/>
</dbReference>
<dbReference type="RefSeq" id="WP_011365264.1">
    <property type="nucleotide sequence ID" value="NC_007516.1"/>
</dbReference>
<dbReference type="SMR" id="Q3AH66"/>
<dbReference type="STRING" id="110662.Syncc9605_2334"/>
<dbReference type="KEGG" id="syd:Syncc9605_2334"/>
<dbReference type="eggNOG" id="COG1555">
    <property type="taxonomic scope" value="Bacteria"/>
</dbReference>
<dbReference type="HOGENOM" id="CLU_141240_1_0_3"/>
<dbReference type="OrthoDB" id="463369at2"/>
<dbReference type="GO" id="GO:0019898">
    <property type="term" value="C:extrinsic component of membrane"/>
    <property type="evidence" value="ECO:0007669"/>
    <property type="project" value="InterPro"/>
</dbReference>
<dbReference type="GO" id="GO:0009654">
    <property type="term" value="C:photosystem II oxygen evolving complex"/>
    <property type="evidence" value="ECO:0007669"/>
    <property type="project" value="InterPro"/>
</dbReference>
<dbReference type="GO" id="GO:0031676">
    <property type="term" value="C:plasma membrane-derived thylakoid membrane"/>
    <property type="evidence" value="ECO:0007669"/>
    <property type="project" value="UniProtKB-SubCell"/>
</dbReference>
<dbReference type="GO" id="GO:0015979">
    <property type="term" value="P:photosynthesis"/>
    <property type="evidence" value="ECO:0007669"/>
    <property type="project" value="UniProtKB-UniRule"/>
</dbReference>
<dbReference type="GO" id="GO:0042549">
    <property type="term" value="P:photosystem II stabilization"/>
    <property type="evidence" value="ECO:0007669"/>
    <property type="project" value="InterPro"/>
</dbReference>
<dbReference type="Gene3D" id="1.10.150.320">
    <property type="entry name" value="Photosystem II 12 kDa extrinsic protein"/>
    <property type="match status" value="1"/>
</dbReference>
<dbReference type="HAMAP" id="MF_00589">
    <property type="entry name" value="PSII_PsbU"/>
    <property type="match status" value="1"/>
</dbReference>
<dbReference type="InterPro" id="IPR010527">
    <property type="entry name" value="PSII_PsbU"/>
</dbReference>
<dbReference type="NCBIfam" id="NF002708">
    <property type="entry name" value="PRK02515.1"/>
    <property type="match status" value="1"/>
</dbReference>
<dbReference type="Pfam" id="PF06514">
    <property type="entry name" value="PsbU"/>
    <property type="match status" value="1"/>
</dbReference>
<dbReference type="SUPFAM" id="SSF81585">
    <property type="entry name" value="PsbU/PolX domain-like"/>
    <property type="match status" value="1"/>
</dbReference>
<feature type="signal peptide" evidence="1">
    <location>
        <begin position="1"/>
        <end position="29"/>
    </location>
</feature>
<feature type="chain" id="PRO_5000102464" description="Photosystem II extrinsic protein U">
    <location>
        <begin position="30"/>
        <end position="135"/>
    </location>
</feature>
<accession>Q3AH66</accession>
<proteinExistence type="inferred from homology"/>
<name>PSBU_SYNSC</name>
<comment type="function">
    <text evidence="1">One of the extrinsic, lumenal subunits of photosystem II (PSII). PSII is a light-driven water plastoquinone oxidoreductase, using light energy to abstract electrons from H(2)O, generating a proton gradient subsequently used for ATP formation. The extrinsic proteins stabilize the structure of photosystem II oxygen-evolving complex (OEC), the ion environment of oxygen evolution and protect the OEC against heat-induced inactivation.</text>
</comment>
<comment type="subunit">
    <text evidence="1">PSII is composed of 1 copy each of membrane proteins PsbA, PsbB, PsbC, PsbD, PsbE, PsbF, PsbH, PsbI, PsbJ, PsbK, PsbL, PsbM, PsbT, PsbX, PsbY, PsbZ, Psb30/Ycf12, peripheral proteins PsbO, CyanoQ (PsbQ), PsbU, PsbV and a large number of cofactors. It forms dimeric complexes.</text>
</comment>
<comment type="subcellular location">
    <subcellularLocation>
        <location evidence="1">Cellular thylakoid membrane</location>
        <topology evidence="1">Peripheral membrane protein</topology>
        <orientation evidence="1">Lumenal side</orientation>
    </subcellularLocation>
</comment>
<comment type="similarity">
    <text evidence="1">Belongs to the PsbU family.</text>
</comment>
<sequence length="135" mass="15082">MKRLLSWLTGALVMASLMAGLVMPSSVYADDDLRNKYSGNEIRNIADDKIAARDGKVDLNNSSVRRFQQFPGMYPTMAGKIVLGGPYDSVDDVLSLDLTERQQELFAKYRDNFTVTPPSIALNEGDDRINDGQYR</sequence>
<reference key="1">
    <citation type="submission" date="2005-07" db="EMBL/GenBank/DDBJ databases">
        <title>Complete sequence of Synechococcus sp. CC9605.</title>
        <authorList>
            <consortium name="US DOE Joint Genome Institute"/>
            <person name="Copeland A."/>
            <person name="Lucas S."/>
            <person name="Lapidus A."/>
            <person name="Barry K."/>
            <person name="Detter J.C."/>
            <person name="Glavina T."/>
            <person name="Hammon N."/>
            <person name="Israni S."/>
            <person name="Pitluck S."/>
            <person name="Schmutz J."/>
            <person name="Martinez M."/>
            <person name="Larimer F."/>
            <person name="Land M."/>
            <person name="Kyrpides N."/>
            <person name="Ivanova N."/>
            <person name="Richardson P."/>
        </authorList>
    </citation>
    <scope>NUCLEOTIDE SEQUENCE [LARGE SCALE GENOMIC DNA]</scope>
    <source>
        <strain>CC9605</strain>
    </source>
</reference>
<organism>
    <name type="scientific">Synechococcus sp. (strain CC9605)</name>
    <dbReference type="NCBI Taxonomy" id="110662"/>
    <lineage>
        <taxon>Bacteria</taxon>
        <taxon>Bacillati</taxon>
        <taxon>Cyanobacteriota</taxon>
        <taxon>Cyanophyceae</taxon>
        <taxon>Synechococcales</taxon>
        <taxon>Synechococcaceae</taxon>
        <taxon>Synechococcus</taxon>
    </lineage>
</organism>
<evidence type="ECO:0000255" key="1">
    <source>
        <dbReference type="HAMAP-Rule" id="MF_00589"/>
    </source>
</evidence>
<protein>
    <recommendedName>
        <fullName evidence="1">Photosystem II extrinsic protein U</fullName>
        <shortName evidence="1">PSII-U</shortName>
        <shortName evidence="1">PsbU</shortName>
    </recommendedName>
    <alternativeName>
        <fullName evidence="1">Photosystem II 12 kDa extrinsic protein</fullName>
        <shortName evidence="1">PS II complex 12 kDa extrinsic protein</shortName>
    </alternativeName>
</protein>